<gene>
    <name type="primary">MRPL24</name>
</gene>
<keyword id="KW-0002">3D-structure</keyword>
<keyword id="KW-0903">Direct protein sequencing</keyword>
<keyword id="KW-0496">Mitochondrion</keyword>
<keyword id="KW-0597">Phosphoprotein</keyword>
<keyword id="KW-1185">Reference proteome</keyword>
<keyword id="KW-0687">Ribonucleoprotein</keyword>
<keyword id="KW-0689">Ribosomal protein</keyword>
<keyword id="KW-0809">Transit peptide</keyword>
<proteinExistence type="evidence at protein level"/>
<comment type="subunit">
    <text evidence="1">Component of the mitochondrial ribosome large subunit (39S) which comprises a 16S rRNA and about 50 distinct proteins.</text>
</comment>
<comment type="subcellular location">
    <subcellularLocation>
        <location evidence="2">Mitochondrion</location>
    </subcellularLocation>
</comment>
<comment type="similarity">
    <text evidence="3">Belongs to the universal ribosomal protein uL24 family.</text>
</comment>
<reference key="1">
    <citation type="submission" date="2005-08" db="EMBL/GenBank/DDBJ databases">
        <authorList>
            <consortium name="NIH - Mammalian Gene Collection (MGC) project"/>
        </authorList>
    </citation>
    <scope>NUCLEOTIDE SEQUENCE [LARGE SCALE MRNA]</scope>
    <source>
        <strain>Crossbred X Angus</strain>
        <tissue>Liver</tissue>
    </source>
</reference>
<reference key="2">
    <citation type="journal article" date="2000" name="J. Biol. Chem.">
        <title>Mammalian mitochondrial ribosomal proteins (4). Amino acid sequencing, characterization, and identification of corresponding gene sequences.</title>
        <authorList>
            <person name="O'Brien T.W."/>
            <person name="Liu J."/>
            <person name="Sylvester J.E."/>
            <person name="Mougey E.B."/>
            <person name="Fischel-Ghodsian N."/>
            <person name="Thiede B."/>
            <person name="Wittmann-Liebold B."/>
            <person name="Graack H.R."/>
        </authorList>
    </citation>
    <scope>PROTEIN SEQUENCE OF 10-23 AND 106-115</scope>
    <scope>SUBCELLULAR LOCATION</scope>
</reference>
<reference key="3">
    <citation type="journal article" date="2006" name="J. Mol. Biol.">
        <title>A structural model for the large subunit of the mammalian mitochondrial ribosome.</title>
        <authorList>
            <person name="Mears J.A."/>
            <person name="Sharma M.R."/>
            <person name="Gutell R.R."/>
            <person name="McCook A.S."/>
            <person name="Richardson P.E."/>
            <person name="Caulfield T.R."/>
            <person name="Agrawal R.K."/>
            <person name="Harvey S.C."/>
        </authorList>
    </citation>
    <scope>STRUCTURE BY ELECTRON MICROSCOPY (12.1 ANGSTROMS) OF 59-154</scope>
</reference>
<name>RM24_BOVIN</name>
<sequence length="216" mass="24786">MRLSALLALASKVTLPPNYRYGMSRPGSLADKKKNPPGTRRRRVAVEPIPEEDWHLFCGDRVEILEGKDAGKQGKVVQVIRQRNWVVVEGLNTHYRYVGKTVDFRGTMVPSEAPLLHNQVKLVDPMDRKPTEVEWRFTEAGERVRVSTRSGRIIPKPDVPRADGIVPETWIDGPKDTSVEDALEKTYVPRLKTLEEEVMEAMGIQETRRHKKVYWY</sequence>
<organism>
    <name type="scientific">Bos taurus</name>
    <name type="common">Bovine</name>
    <dbReference type="NCBI Taxonomy" id="9913"/>
    <lineage>
        <taxon>Eukaryota</taxon>
        <taxon>Metazoa</taxon>
        <taxon>Chordata</taxon>
        <taxon>Craniata</taxon>
        <taxon>Vertebrata</taxon>
        <taxon>Euteleostomi</taxon>
        <taxon>Mammalia</taxon>
        <taxon>Eutheria</taxon>
        <taxon>Laurasiatheria</taxon>
        <taxon>Artiodactyla</taxon>
        <taxon>Ruminantia</taxon>
        <taxon>Pecora</taxon>
        <taxon>Bovidae</taxon>
        <taxon>Bovinae</taxon>
        <taxon>Bos</taxon>
    </lineage>
</organism>
<dbReference type="EMBL" id="BC103424">
    <property type="protein sequence ID" value="AAI03425.1"/>
    <property type="molecule type" value="mRNA"/>
</dbReference>
<dbReference type="RefSeq" id="NP_001029748.1">
    <property type="nucleotide sequence ID" value="NM_001034576.2"/>
</dbReference>
<dbReference type="PDB" id="2FTC">
    <property type="method" value="EM"/>
    <property type="resolution" value="12.10 A"/>
    <property type="chains" value="N=59-154"/>
</dbReference>
<dbReference type="PDB" id="3IY9">
    <property type="method" value="EM"/>
    <property type="resolution" value="14.10 A"/>
    <property type="chains" value="N=59-154"/>
</dbReference>
<dbReference type="PDBsum" id="2FTC"/>
<dbReference type="PDBsum" id="3IY9"/>
<dbReference type="SMR" id="Q3SYS0"/>
<dbReference type="FunCoup" id="Q3SYS0">
    <property type="interactions" value="2237"/>
</dbReference>
<dbReference type="IntAct" id="Q3SYS0">
    <property type="interactions" value="1"/>
</dbReference>
<dbReference type="STRING" id="9913.ENSBTAP00000001991"/>
<dbReference type="iPTMnet" id="Q3SYS0"/>
<dbReference type="PaxDb" id="9913-ENSBTAP00000001991"/>
<dbReference type="Ensembl" id="ENSBTAT00000001991.4">
    <property type="protein sequence ID" value="ENSBTAP00000001991.2"/>
    <property type="gene ID" value="ENSBTAG00000001520.6"/>
</dbReference>
<dbReference type="GeneID" id="532203"/>
<dbReference type="KEGG" id="bta:532203"/>
<dbReference type="CTD" id="79590"/>
<dbReference type="VEuPathDB" id="HostDB:ENSBTAG00000001520"/>
<dbReference type="VGNC" id="VGNC:31627">
    <property type="gene designation" value="MRPL24"/>
</dbReference>
<dbReference type="eggNOG" id="KOG1708">
    <property type="taxonomic scope" value="Eukaryota"/>
</dbReference>
<dbReference type="GeneTree" id="ENSGT00390000014542"/>
<dbReference type="HOGENOM" id="CLU_093315_0_1_1"/>
<dbReference type="InParanoid" id="Q3SYS0"/>
<dbReference type="OMA" id="DFEWRFT"/>
<dbReference type="OrthoDB" id="359154at2759"/>
<dbReference type="TreeFam" id="TF105984"/>
<dbReference type="Reactome" id="R-BTA-5389840">
    <property type="pathway name" value="Mitochondrial translation elongation"/>
</dbReference>
<dbReference type="Reactome" id="R-BTA-5419276">
    <property type="pathway name" value="Mitochondrial translation termination"/>
</dbReference>
<dbReference type="EvolutionaryTrace" id="Q3SYS0"/>
<dbReference type="Proteomes" id="UP000009136">
    <property type="component" value="Chromosome 3"/>
</dbReference>
<dbReference type="Bgee" id="ENSBTAG00000001520">
    <property type="expression patterns" value="Expressed in tongue muscle and 106 other cell types or tissues"/>
</dbReference>
<dbReference type="GO" id="GO:0005743">
    <property type="term" value="C:mitochondrial inner membrane"/>
    <property type="evidence" value="ECO:0000304"/>
    <property type="project" value="Reactome"/>
</dbReference>
<dbReference type="GO" id="GO:0005762">
    <property type="term" value="C:mitochondrial large ribosomal subunit"/>
    <property type="evidence" value="ECO:0000250"/>
    <property type="project" value="UniProtKB"/>
</dbReference>
<dbReference type="GO" id="GO:0005739">
    <property type="term" value="C:mitochondrion"/>
    <property type="evidence" value="ECO:0000318"/>
    <property type="project" value="GO_Central"/>
</dbReference>
<dbReference type="GO" id="GO:0003723">
    <property type="term" value="F:RNA binding"/>
    <property type="evidence" value="ECO:0007669"/>
    <property type="project" value="InterPro"/>
</dbReference>
<dbReference type="GO" id="GO:0003735">
    <property type="term" value="F:structural constituent of ribosome"/>
    <property type="evidence" value="ECO:0007669"/>
    <property type="project" value="InterPro"/>
</dbReference>
<dbReference type="GO" id="GO:0006412">
    <property type="term" value="P:translation"/>
    <property type="evidence" value="ECO:0000318"/>
    <property type="project" value="GO_Central"/>
</dbReference>
<dbReference type="CDD" id="cd06089">
    <property type="entry name" value="KOW_RPL26"/>
    <property type="match status" value="1"/>
</dbReference>
<dbReference type="FunFam" id="2.30.30.30:FF:000032">
    <property type="entry name" value="39S ribosomal protein L24, mitochondrial"/>
    <property type="match status" value="1"/>
</dbReference>
<dbReference type="Gene3D" id="2.30.30.30">
    <property type="match status" value="1"/>
</dbReference>
<dbReference type="HAMAP" id="MF_01326_B">
    <property type="entry name" value="Ribosomal_uL24_B"/>
    <property type="match status" value="1"/>
</dbReference>
<dbReference type="InterPro" id="IPR005824">
    <property type="entry name" value="KOW"/>
</dbReference>
<dbReference type="InterPro" id="IPR014722">
    <property type="entry name" value="Rib_uL2_dom2"/>
</dbReference>
<dbReference type="InterPro" id="IPR003256">
    <property type="entry name" value="Ribosomal_uL24"/>
</dbReference>
<dbReference type="InterPro" id="IPR005825">
    <property type="entry name" value="Ribosomal_uL24_CS"/>
</dbReference>
<dbReference type="InterPro" id="IPR041988">
    <property type="entry name" value="Ribosomal_uL24_KOW"/>
</dbReference>
<dbReference type="InterPro" id="IPR008991">
    <property type="entry name" value="Translation_prot_SH3-like_sf"/>
</dbReference>
<dbReference type="NCBIfam" id="TIGR01079">
    <property type="entry name" value="rplX_bact"/>
    <property type="match status" value="1"/>
</dbReference>
<dbReference type="PANTHER" id="PTHR12903">
    <property type="entry name" value="MITOCHONDRIAL RIBOSOMAL PROTEIN L24"/>
    <property type="match status" value="1"/>
</dbReference>
<dbReference type="Pfam" id="PF00467">
    <property type="entry name" value="KOW"/>
    <property type="match status" value="1"/>
</dbReference>
<dbReference type="Pfam" id="PF17136">
    <property type="entry name" value="ribosomal_L24"/>
    <property type="match status" value="1"/>
</dbReference>
<dbReference type="SMART" id="SM00739">
    <property type="entry name" value="KOW"/>
    <property type="match status" value="1"/>
</dbReference>
<dbReference type="SUPFAM" id="SSF50104">
    <property type="entry name" value="Translation proteins SH3-like domain"/>
    <property type="match status" value="1"/>
</dbReference>
<dbReference type="PROSITE" id="PS01108">
    <property type="entry name" value="RIBOSOMAL_L24"/>
    <property type="match status" value="1"/>
</dbReference>
<feature type="transit peptide" description="Mitochondrion" evidence="2">
    <location>
        <begin position="1"/>
        <end position="9"/>
    </location>
</feature>
<feature type="chain" id="PRO_0000270487" description="Large ribosomal subunit protein uL24m">
    <location>
        <begin position="10"/>
        <end position="216"/>
    </location>
</feature>
<feature type="domain" description="KOW">
    <location>
        <begin position="56"/>
        <end position="89"/>
    </location>
</feature>
<feature type="modified residue" description="Phosphoserine" evidence="1">
    <location>
        <position position="24"/>
    </location>
</feature>
<accession>Q3SYS0</accession>
<evidence type="ECO:0000250" key="1">
    <source>
        <dbReference type="UniProtKB" id="Q96A35"/>
    </source>
</evidence>
<evidence type="ECO:0000269" key="2">
    <source>
    </source>
</evidence>
<evidence type="ECO:0000305" key="3"/>
<protein>
    <recommendedName>
        <fullName evidence="3">Large ribosomal subunit protein uL24m</fullName>
    </recommendedName>
    <alternativeName>
        <fullName>39S ribosomal protein L24, mitochondrial</fullName>
        <shortName>L24mt</shortName>
        <shortName>MRP-L24</shortName>
    </alternativeName>
</protein>